<reference key="1">
    <citation type="journal article" date="2002" name="Biochem. Biophys. Res. Commun.">
        <title>Cloning and characterization of the highly expressed ETEA gene from blood cells of atopic dermatitis patients.</title>
        <authorList>
            <person name="Imai Y."/>
            <person name="Nakada A."/>
            <person name="Hashida R."/>
            <person name="Sugita Y."/>
            <person name="Tanaka T."/>
            <person name="Tsujimoto G."/>
            <person name="Matsumoto K."/>
            <person name="Akasawa A."/>
            <person name="Saito H."/>
            <person name="Oshida T."/>
        </authorList>
    </citation>
    <scope>NUCLEOTIDE SEQUENCE [MRNA]</scope>
    <scope>TISSUE SPECIFICITY</scope>
    <scope>SUBCELLULAR LOCATION</scope>
    <source>
        <tissue>T-cell</tissue>
    </source>
</reference>
<reference key="2">
    <citation type="journal article" date="2004" name="Genome Res.">
        <title>The status, quality, and expansion of the NIH full-length cDNA project: the Mammalian Gene Collection (MGC).</title>
        <authorList>
            <consortium name="The MGC Project Team"/>
        </authorList>
    </citation>
    <scope>NUCLEOTIDE SEQUENCE [LARGE SCALE MRNA]</scope>
    <source>
        <tissue>Lung</tissue>
        <tissue>Muscle</tissue>
    </source>
</reference>
<reference key="3">
    <citation type="journal article" date="1998" name="DNA Res.">
        <title>Prediction of the coding sequences of unidentified human genes. XII. The complete sequences of 100 new cDNA clones from brain which code for large proteins in vitro.</title>
        <authorList>
            <person name="Nagase T."/>
            <person name="Ishikawa K."/>
            <person name="Suyama M."/>
            <person name="Kikuno R."/>
            <person name="Hirosawa M."/>
            <person name="Miyajima N."/>
            <person name="Tanaka A."/>
            <person name="Kotani H."/>
            <person name="Nomura N."/>
            <person name="Ohara O."/>
        </authorList>
    </citation>
    <scope>NUCLEOTIDE SEQUENCE [LARGE SCALE MRNA] OF 3-445</scope>
    <source>
        <tissue>Brain</tissue>
    </source>
</reference>
<reference key="4">
    <citation type="journal article" date="2008" name="Proc. Natl. Acad. Sci. U.S.A.">
        <title>SEL1L nucleates a protein complex required for dislocation of misfolded glycoproteins.</title>
        <authorList>
            <person name="Mueller B."/>
            <person name="Klemm E.J."/>
            <person name="Spooner E."/>
            <person name="Claessen J.H."/>
            <person name="Ploegh H.L."/>
        </authorList>
    </citation>
    <scope>IDENTIFICATION IN A COMPLEX WITH SEL1L</scope>
    <scope>SUBCELLULAR LOCATION</scope>
    <scope>FUNCTION</scope>
</reference>
<reference key="5">
    <citation type="journal article" date="2009" name="Anal. Chem.">
        <title>Lys-N and trypsin cover complementary parts of the phosphoproteome in a refined SCX-based approach.</title>
        <authorList>
            <person name="Gauci S."/>
            <person name="Helbig A.O."/>
            <person name="Slijper M."/>
            <person name="Krijgsveld J."/>
            <person name="Heck A.J."/>
            <person name="Mohammed S."/>
        </authorList>
    </citation>
    <scope>ACETYLATION [LARGE SCALE ANALYSIS] AT ALA-2</scope>
    <scope>CLEAVAGE OF INITIATOR METHIONINE [LARGE SCALE ANALYSIS]</scope>
    <scope>IDENTIFICATION BY MASS SPECTROMETRY [LARGE SCALE ANALYSIS]</scope>
</reference>
<reference key="6">
    <citation type="journal article" date="2009" name="J. Cell Sci.">
        <title>Targeting sequences of UBXD8 and AAM-B reveal that the ER has a direct role in the emergence and regression of lipid droplets.</title>
        <authorList>
            <person name="Zehmer J.K."/>
            <person name="Bartz R."/>
            <person name="Bisel B."/>
            <person name="Liu P."/>
            <person name="Seemann J."/>
            <person name="Anderson R.G.W."/>
        </authorList>
    </citation>
    <scope>SUBCELLULAR LOCATION</scope>
</reference>
<reference key="7">
    <citation type="journal article" date="2009" name="Mol. Cell">
        <title>The otubain YOD1 is a deubiquitinating enzyme that associates with p97 to facilitate protein dislocation from the ER.</title>
        <authorList>
            <person name="Ernst R."/>
            <person name="Mueller B."/>
            <person name="Ploegh H.L."/>
            <person name="Schlieker C."/>
        </authorList>
    </citation>
    <scope>INTERACTION WITH YOD1</scope>
</reference>
<reference key="8">
    <citation type="journal article" date="2009" name="Science">
        <title>Lysine acetylation targets protein complexes and co-regulates major cellular functions.</title>
        <authorList>
            <person name="Choudhary C."/>
            <person name="Kumar C."/>
            <person name="Gnad F."/>
            <person name="Nielsen M.L."/>
            <person name="Rehman M."/>
            <person name="Walther T.C."/>
            <person name="Olsen J.V."/>
            <person name="Mann M."/>
        </authorList>
    </citation>
    <scope>ACETYLATION [LARGE SCALE ANALYSIS] AT LYS-167</scope>
    <scope>IDENTIFICATION BY MASS SPECTROMETRY [LARGE SCALE ANALYSIS]</scope>
</reference>
<reference key="9">
    <citation type="journal article" date="2011" name="BMC Syst. Biol.">
        <title>Initial characterization of the human central proteome.</title>
        <authorList>
            <person name="Burkard T.R."/>
            <person name="Planyavsky M."/>
            <person name="Kaupe I."/>
            <person name="Breitwieser F.P."/>
            <person name="Buerckstuemmer T."/>
            <person name="Bennett K.L."/>
            <person name="Superti-Furga G."/>
            <person name="Colinge J."/>
        </authorList>
    </citation>
    <scope>IDENTIFICATION BY MASS SPECTROMETRY [LARGE SCALE ANALYSIS]</scope>
</reference>
<reference key="10">
    <citation type="journal article" date="2013" name="Proc. Natl. Acad. Sci. U.S.A.">
        <title>Spatial regulation of UBXD8 and p97/VCP controls ATGL-mediated lipid droplet turnover.</title>
        <authorList>
            <person name="Olzmann J.A."/>
            <person name="Richter C.M."/>
            <person name="Kopito R.R."/>
        </authorList>
    </citation>
    <scope>FUNCTION</scope>
    <scope>INTERACTION WITH PNPLA2 AND UBAC2</scope>
    <scope>SUBCELLULAR LOCATION</scope>
</reference>
<reference key="11">
    <citation type="journal article" date="2014" name="Biochem. J.">
        <title>Signal-peptide-mediated translocation is regulated by a p97-AIRAPL complex.</title>
        <authorList>
            <person name="Glinka T."/>
            <person name="Alter J."/>
            <person name="Braunstein I."/>
            <person name="Tzach L."/>
            <person name="Wei Sheng C."/>
            <person name="Geifman S."/>
            <person name="Edelmann M.J."/>
            <person name="Kessler B.M."/>
            <person name="Stanhill A."/>
        </authorList>
    </citation>
    <scope>INTERACTION WITH ZFAND2B</scope>
</reference>
<reference key="12">
    <citation type="journal article" date="2014" name="J. Neurochem.">
        <title>Pathogenic mutation of UBQLN2 impairs its interaction with UBXD8 and disrupts endoplasmic reticulum-associated protein degradation.</title>
        <authorList>
            <person name="Xia Y."/>
            <person name="Yan L.H."/>
            <person name="Huang B."/>
            <person name="Liu M."/>
            <person name="Liu X."/>
            <person name="Huang C."/>
        </authorList>
    </citation>
    <scope>FUNCTION</scope>
    <scope>INTERACTION WITH UBQLN2</scope>
</reference>
<reference key="13">
    <citation type="journal article" date="2014" name="J. Proteomics">
        <title>An enzyme assisted RP-RPLC approach for in-depth analysis of human liver phosphoproteome.</title>
        <authorList>
            <person name="Bian Y."/>
            <person name="Song C."/>
            <person name="Cheng K."/>
            <person name="Dong M."/>
            <person name="Wang F."/>
            <person name="Huang J."/>
            <person name="Sun D."/>
            <person name="Wang L."/>
            <person name="Ye M."/>
            <person name="Zou H."/>
        </authorList>
    </citation>
    <scope>IDENTIFICATION BY MASS SPECTROMETRY [LARGE SCALE ANALYSIS]</scope>
    <source>
        <tissue>Liver</tissue>
    </source>
</reference>
<reference key="14">
    <citation type="journal article" date="2015" name="Proteomics">
        <title>N-terminome analysis of the human mitochondrial proteome.</title>
        <authorList>
            <person name="Vaca Jacome A.S."/>
            <person name="Rabilloud T."/>
            <person name="Schaeffer-Reiss C."/>
            <person name="Rompais M."/>
            <person name="Ayoub D."/>
            <person name="Lane L."/>
            <person name="Bairoch A."/>
            <person name="Van Dorsselaer A."/>
            <person name="Carapito C."/>
        </authorList>
    </citation>
    <scope>IDENTIFICATION BY MASS SPECTROMETRY [LARGE SCALE ANALYSIS]</scope>
</reference>
<reference key="15">
    <citation type="journal article" date="2016" name="Nat. Med.">
        <title>Loss of the proteostasis factor AIRAPL causes myeloid transformation by deregulating IGF-1 signaling.</title>
        <authorList>
            <person name="Osorio F.G."/>
            <person name="Soria-Valles C."/>
            <person name="Santiago-Fernandez O."/>
            <person name="Bernal T."/>
            <person name="Mittelbrunn M."/>
            <person name="Colado E."/>
            <person name="Rodriguez F."/>
            <person name="Bonzon-Kulichenko E."/>
            <person name="Vazquez J."/>
            <person name="Porta-de-la-Riva M."/>
            <person name="Ceron J."/>
            <person name="Fueyo A."/>
            <person name="Li J."/>
            <person name="Green A.R."/>
            <person name="Freije J.M."/>
            <person name="Lopez-Otin C."/>
        </authorList>
    </citation>
    <scope>FUNCTION</scope>
</reference>
<reference key="16">
    <citation type="journal article" date="2019" name="Science">
        <title>LMBR1L regulates lymphopoiesis through Wnt/beta-catenin signaling.</title>
        <authorList>
            <person name="Choi J.H."/>
            <person name="Zhong X."/>
            <person name="McAlpine W."/>
            <person name="Liao T.C."/>
            <person name="Zhang D."/>
            <person name="Fang B."/>
            <person name="Russell J."/>
            <person name="Ludwig S."/>
            <person name="Nair-Gill E."/>
            <person name="Zhang Z."/>
            <person name="Wang K.W."/>
            <person name="Misawa T."/>
            <person name="Zhan X."/>
            <person name="Choi M."/>
            <person name="Wang T."/>
            <person name="Li X."/>
            <person name="Tang M."/>
            <person name="Sun Q."/>
            <person name="Yu L."/>
            <person name="Murray A.R."/>
            <person name="Moresco E.M.Y."/>
            <person name="Beutler B."/>
        </authorList>
    </citation>
    <scope>INTERACTION WITH LMBR1L</scope>
</reference>
<reference key="17">
    <citation type="journal article" date="2021" name="Science">
        <title>Ubiquitination of G3BP1 mediates stress granule disassembly in a context-specific manner.</title>
        <authorList>
            <person name="Gwon Y."/>
            <person name="Maxwell B.A."/>
            <person name="Kolaitis R.M."/>
            <person name="Zhang P."/>
            <person name="Kim H.J."/>
            <person name="Taylor J.P."/>
        </authorList>
    </citation>
    <scope>FUNCTION</scope>
    <scope>SUBCELLULAR LOCATION</scope>
</reference>
<reference key="18">
    <citation type="submission" date="2006-06" db="PDB data bank">
        <title>Solution structure of the novel identified UBA-like domain in the N-terminal of human ETEA protein.</title>
        <authorList>
            <consortium name="RIKEN structural genomics initiative (RSGI)"/>
        </authorList>
    </citation>
    <scope>STRUCTURE BY NMR OF 3-56</scope>
</reference>
<name>FAF2_HUMAN</name>
<evidence type="ECO:0000255" key="1"/>
<evidence type="ECO:0000255" key="2">
    <source>
        <dbReference type="PROSITE-ProRule" id="PRU00215"/>
    </source>
</evidence>
<evidence type="ECO:0000256" key="3">
    <source>
        <dbReference type="SAM" id="MobiDB-lite"/>
    </source>
</evidence>
<evidence type="ECO:0000269" key="4">
    <source>
    </source>
</evidence>
<evidence type="ECO:0000269" key="5">
    <source>
    </source>
</evidence>
<evidence type="ECO:0000269" key="6">
    <source>
    </source>
</evidence>
<evidence type="ECO:0000269" key="7">
    <source>
    </source>
</evidence>
<evidence type="ECO:0000269" key="8">
    <source>
    </source>
</evidence>
<evidence type="ECO:0000269" key="9">
    <source>
    </source>
</evidence>
<evidence type="ECO:0000269" key="10">
    <source>
    </source>
</evidence>
<evidence type="ECO:0000269" key="11">
    <source>
    </source>
</evidence>
<evidence type="ECO:0000269" key="12">
    <source>
    </source>
</evidence>
<evidence type="ECO:0000303" key="13">
    <source>
    </source>
</evidence>
<evidence type="ECO:0000303" key="14">
    <source>
    </source>
</evidence>
<evidence type="ECO:0000303" key="15">
    <source>
    </source>
</evidence>
<evidence type="ECO:0000305" key="16">
    <source>
    </source>
</evidence>
<evidence type="ECO:0000312" key="17">
    <source>
        <dbReference type="HGNC" id="HGNC:24666"/>
    </source>
</evidence>
<evidence type="ECO:0007744" key="18">
    <source>
    </source>
</evidence>
<evidence type="ECO:0007744" key="19">
    <source>
    </source>
</evidence>
<evidence type="ECO:0007829" key="20">
    <source>
        <dbReference type="PDB" id="2DAM"/>
    </source>
</evidence>
<proteinExistence type="evidence at protein level"/>
<accession>Q96CS3</accession>
<accession>O94963</accession>
<accession>Q8IUF2</accession>
<accession>Q9BRP2</accession>
<accession>Q9BVM7</accession>
<protein>
    <recommendedName>
        <fullName>FAS-associated factor 2</fullName>
    </recommendedName>
    <alternativeName>
        <fullName>UBX domain-containing protein 3B</fullName>
    </alternativeName>
    <alternativeName>
        <fullName>UBX domain-containing protein 8</fullName>
    </alternativeName>
</protein>
<comment type="function">
    <text evidence="5 8 10 11 12">Plays an important role in endoplasmic reticulum-associated degradation (ERAD) that mediates ubiquitin-dependent degradation of misfolded endoplasmic reticulum proteins (PubMed:18711132, PubMed:24215460). By controlling the steady-state expression of the IGF1R receptor, indirectly regulates the insulin-like growth factor receptor signaling pathway (PubMed:26692333). Involved in inhibition of lipid droplet degradation by binding to phospholipase PNPL2 and inhibiting its activity by promoting dissociation of PNPL2 from its endogenous activator, ABHD5 which inhibits the rate of triacylglycerol hydrolysis (PubMed:23297223). Involved in stress granule disassembly: associates with ubiquitinated G3BP1 in response to heat shock, thereby promoting interaction between ubiquitinated G3BP1 and VCP, followed by G3BP1 extraction from stress granules and stress granule disassembly (PubMed:34739333).</text>
</comment>
<comment type="subunit">
    <text evidence="5 7 8 9 10 16">Identified in a complex that contains SEL1L, OS9, FAF2/UBXD8, UBE2J1/UBC6E and AUP1 (PubMed:18711132). Interacts with YOD1 (PubMed:19818707). Interacts (via N-terminus) with UBQLN2 (via C-terminus) (PubMed:24215460). Interacts with PNPLA2 and UBAC2 (PubMed:23297223). Interacts with ZFAND2B; probably through VCP (PubMed:24160817). Interacts with LMBR1L (PubMed:31073040).</text>
</comment>
<comment type="interaction">
    <interactant intactId="EBI-1055805">
        <id>Q96CS3</id>
    </interactant>
    <interactant intactId="EBI-724045">
        <id>Q8NBM4</id>
        <label>UBAC2</label>
    </interactant>
    <organismsDiffer>false</organismsDiffer>
    <experiments>7</experiments>
</comment>
<comment type="interaction">
    <interactant intactId="EBI-1055805">
        <id>Q96CS3</id>
    </interactant>
    <interactant intactId="EBI-748201">
        <id>P50552</id>
        <label>VASP</label>
    </interactant>
    <organismsDiffer>false</organismsDiffer>
    <experiments>2</experiments>
</comment>
<comment type="interaction">
    <interactant intactId="EBI-1055805">
        <id>Q96CS3</id>
    </interactant>
    <interactant intactId="EBI-355164">
        <id>P55072</id>
        <label>VCP</label>
    </interactant>
    <organismsDiffer>false</organismsDiffer>
    <experiments>14</experiments>
</comment>
<comment type="subcellular location">
    <subcellularLocation>
        <location evidence="4">Cytoplasm</location>
    </subcellularLocation>
    <subcellularLocation>
        <location evidence="6 8">Lipid droplet</location>
    </subcellularLocation>
    <subcellularLocation>
        <location evidence="5 8 12">Endoplasmic reticulum</location>
    </subcellularLocation>
</comment>
<comment type="tissue specificity">
    <text evidence="4">Broadly expressed, with highest levels in brain.</text>
</comment>
<comment type="miscellaneous">
    <text>Up-regulated in T-cells and eosinophils from patients with atopic dermatitis.</text>
</comment>
<organism>
    <name type="scientific">Homo sapiens</name>
    <name type="common">Human</name>
    <dbReference type="NCBI Taxonomy" id="9606"/>
    <lineage>
        <taxon>Eukaryota</taxon>
        <taxon>Metazoa</taxon>
        <taxon>Chordata</taxon>
        <taxon>Craniata</taxon>
        <taxon>Vertebrata</taxon>
        <taxon>Euteleostomi</taxon>
        <taxon>Mammalia</taxon>
        <taxon>Eutheria</taxon>
        <taxon>Euarchontoglires</taxon>
        <taxon>Primates</taxon>
        <taxon>Haplorrhini</taxon>
        <taxon>Catarrhini</taxon>
        <taxon>Hominidae</taxon>
        <taxon>Homo</taxon>
    </lineage>
</organism>
<feature type="initiator methionine" description="Removed" evidence="18">
    <location>
        <position position="1"/>
    </location>
</feature>
<feature type="chain" id="PRO_0000244064" description="FAS-associated factor 2">
    <location>
        <begin position="2"/>
        <end position="445"/>
    </location>
</feature>
<feature type="domain" description="UBA">
    <location>
        <begin position="12"/>
        <end position="48"/>
    </location>
</feature>
<feature type="domain" description="UBX" evidence="2">
    <location>
        <begin position="357"/>
        <end position="439"/>
    </location>
</feature>
<feature type="region of interest" description="Disordered" evidence="3">
    <location>
        <begin position="299"/>
        <end position="361"/>
    </location>
</feature>
<feature type="coiled-coil region" evidence="1">
    <location>
        <begin position="275"/>
        <end position="350"/>
    </location>
</feature>
<feature type="compositionally biased region" description="Basic and acidic residues" evidence="3">
    <location>
        <begin position="303"/>
        <end position="348"/>
    </location>
</feature>
<feature type="modified residue" description="N-acetylalanine" evidence="18">
    <location>
        <position position="2"/>
    </location>
</feature>
<feature type="modified residue" description="N6-acetyllysine" evidence="19">
    <location>
        <position position="167"/>
    </location>
</feature>
<feature type="helix" evidence="20">
    <location>
        <begin position="11"/>
        <end position="24"/>
    </location>
</feature>
<feature type="helix" evidence="20">
    <location>
        <begin position="29"/>
        <end position="39"/>
    </location>
</feature>
<feature type="helix" evidence="20">
    <location>
        <begin position="43"/>
        <end position="52"/>
    </location>
</feature>
<dbReference type="EMBL" id="AB088120">
    <property type="protein sequence ID" value="BAC22491.1"/>
    <property type="molecule type" value="mRNA"/>
</dbReference>
<dbReference type="EMBL" id="BC001069">
    <property type="protein sequence ID" value="AAH01069.2"/>
    <property type="molecule type" value="mRNA"/>
</dbReference>
<dbReference type="EMBL" id="BC006145">
    <property type="protein sequence ID" value="AAH06145.2"/>
    <property type="molecule type" value="mRNA"/>
</dbReference>
<dbReference type="EMBL" id="BC014001">
    <property type="protein sequence ID" value="AAH14001.2"/>
    <property type="molecule type" value="mRNA"/>
</dbReference>
<dbReference type="EMBL" id="AB020694">
    <property type="protein sequence ID" value="BAA74910.1"/>
    <property type="molecule type" value="mRNA"/>
</dbReference>
<dbReference type="CCDS" id="CCDS34296.1"/>
<dbReference type="RefSeq" id="NP_055428.1">
    <property type="nucleotide sequence ID" value="NM_014613.3"/>
</dbReference>
<dbReference type="PDB" id="2DAM">
    <property type="method" value="NMR"/>
    <property type="chains" value="A=3-56"/>
</dbReference>
<dbReference type="PDBsum" id="2DAM"/>
<dbReference type="BMRB" id="Q96CS3"/>
<dbReference type="SMR" id="Q96CS3"/>
<dbReference type="BioGRID" id="116806">
    <property type="interactions" value="474"/>
</dbReference>
<dbReference type="ComplexPortal" id="CPX-8104">
    <property type="entry name" value="VCP-NPL4-UFD1-FAF2 AAA ATPase complex"/>
</dbReference>
<dbReference type="CORUM" id="Q96CS3"/>
<dbReference type="DIP" id="DIP-46261N"/>
<dbReference type="FunCoup" id="Q96CS3">
    <property type="interactions" value="3619"/>
</dbReference>
<dbReference type="IntAct" id="Q96CS3">
    <property type="interactions" value="187"/>
</dbReference>
<dbReference type="MINT" id="Q96CS3"/>
<dbReference type="STRING" id="9606.ENSP00000261942"/>
<dbReference type="GlyGen" id="Q96CS3">
    <property type="glycosylation" value="2 sites, 1 N-linked glycan (1 site), 1 O-linked glycan (1 site)"/>
</dbReference>
<dbReference type="iPTMnet" id="Q96CS3"/>
<dbReference type="MetOSite" id="Q96CS3"/>
<dbReference type="PhosphoSitePlus" id="Q96CS3"/>
<dbReference type="SwissPalm" id="Q96CS3"/>
<dbReference type="BioMuta" id="FAF2"/>
<dbReference type="DMDM" id="74731375"/>
<dbReference type="jPOST" id="Q96CS3"/>
<dbReference type="MassIVE" id="Q96CS3"/>
<dbReference type="PaxDb" id="9606-ENSP00000261942"/>
<dbReference type="PeptideAtlas" id="Q96CS3"/>
<dbReference type="ProteomicsDB" id="76214"/>
<dbReference type="Pumba" id="Q96CS3"/>
<dbReference type="Antibodypedia" id="29092">
    <property type="antibodies" value="206 antibodies from 34 providers"/>
</dbReference>
<dbReference type="DNASU" id="23197"/>
<dbReference type="Ensembl" id="ENST00000261942.7">
    <property type="protein sequence ID" value="ENSP00000261942.6"/>
    <property type="gene ID" value="ENSG00000113194.13"/>
</dbReference>
<dbReference type="GeneID" id="23197"/>
<dbReference type="KEGG" id="hsa:23197"/>
<dbReference type="MANE-Select" id="ENST00000261942.7">
    <property type="protein sequence ID" value="ENSP00000261942.6"/>
    <property type="RefSeq nucleotide sequence ID" value="NM_014613.3"/>
    <property type="RefSeq protein sequence ID" value="NP_055428.1"/>
</dbReference>
<dbReference type="UCSC" id="uc003mej.4">
    <property type="organism name" value="human"/>
</dbReference>
<dbReference type="AGR" id="HGNC:24666"/>
<dbReference type="CTD" id="23197"/>
<dbReference type="DisGeNET" id="23197"/>
<dbReference type="GeneCards" id="FAF2"/>
<dbReference type="HGNC" id="HGNC:24666">
    <property type="gene designation" value="FAF2"/>
</dbReference>
<dbReference type="HPA" id="ENSG00000113194">
    <property type="expression patterns" value="Low tissue specificity"/>
</dbReference>
<dbReference type="MIM" id="616935">
    <property type="type" value="gene"/>
</dbReference>
<dbReference type="neXtProt" id="NX_Q96CS3"/>
<dbReference type="OpenTargets" id="ENSG00000113194"/>
<dbReference type="PharmGKB" id="PA162385570"/>
<dbReference type="VEuPathDB" id="HostDB:ENSG00000113194"/>
<dbReference type="eggNOG" id="KOG1363">
    <property type="taxonomic scope" value="Eukaryota"/>
</dbReference>
<dbReference type="GeneTree" id="ENSGT00940000157197"/>
<dbReference type="HOGENOM" id="CLU_047924_0_0_1"/>
<dbReference type="InParanoid" id="Q96CS3"/>
<dbReference type="OMA" id="ILIRHQW"/>
<dbReference type="OrthoDB" id="1026733at2759"/>
<dbReference type="PAN-GO" id="Q96CS3">
    <property type="GO annotations" value="3 GO annotations based on evolutionary models"/>
</dbReference>
<dbReference type="PhylomeDB" id="Q96CS3"/>
<dbReference type="TreeFam" id="TF314172"/>
<dbReference type="PathwayCommons" id="Q96CS3"/>
<dbReference type="Reactome" id="R-HSA-6798695">
    <property type="pathway name" value="Neutrophil degranulation"/>
</dbReference>
<dbReference type="Reactome" id="R-HSA-8980692">
    <property type="pathway name" value="RHOA GTPase cycle"/>
</dbReference>
<dbReference type="SignaLink" id="Q96CS3"/>
<dbReference type="SIGNOR" id="Q96CS3"/>
<dbReference type="BioGRID-ORCS" id="23197">
    <property type="hits" value="304 hits in 1160 CRISPR screens"/>
</dbReference>
<dbReference type="ChiTaRS" id="FAF2">
    <property type="organism name" value="human"/>
</dbReference>
<dbReference type="EvolutionaryTrace" id="Q96CS3"/>
<dbReference type="GenomeRNAi" id="23197"/>
<dbReference type="Pharos" id="Q96CS3">
    <property type="development level" value="Tbio"/>
</dbReference>
<dbReference type="PRO" id="PR:Q96CS3"/>
<dbReference type="Proteomes" id="UP000005640">
    <property type="component" value="Chromosome 5"/>
</dbReference>
<dbReference type="RNAct" id="Q96CS3">
    <property type="molecule type" value="protein"/>
</dbReference>
<dbReference type="Bgee" id="ENSG00000113194">
    <property type="expression patterns" value="Expressed in parotid gland and 203 other cell types or tissues"/>
</dbReference>
<dbReference type="ExpressionAtlas" id="Q96CS3">
    <property type="expression patterns" value="baseline and differential"/>
</dbReference>
<dbReference type="GO" id="GO:0035578">
    <property type="term" value="C:azurophil granule lumen"/>
    <property type="evidence" value="ECO:0000304"/>
    <property type="project" value="Reactome"/>
</dbReference>
<dbReference type="GO" id="GO:0005783">
    <property type="term" value="C:endoplasmic reticulum"/>
    <property type="evidence" value="ECO:0000314"/>
    <property type="project" value="UniProtKB"/>
</dbReference>
<dbReference type="GO" id="GO:0005576">
    <property type="term" value="C:extracellular region"/>
    <property type="evidence" value="ECO:0000304"/>
    <property type="project" value="Reactome"/>
</dbReference>
<dbReference type="GO" id="GO:0005811">
    <property type="term" value="C:lipid droplet"/>
    <property type="evidence" value="ECO:0000314"/>
    <property type="project" value="UniProtKB"/>
</dbReference>
<dbReference type="GO" id="GO:0034098">
    <property type="term" value="C:VCP-NPL4-UFD1 AAA ATPase complex"/>
    <property type="evidence" value="ECO:0000314"/>
    <property type="project" value="BHF-UCL"/>
</dbReference>
<dbReference type="GO" id="GO:0035473">
    <property type="term" value="F:lipase binding"/>
    <property type="evidence" value="ECO:0000314"/>
    <property type="project" value="MGI"/>
</dbReference>
<dbReference type="GO" id="GO:0055102">
    <property type="term" value="F:lipase inhibitor activity"/>
    <property type="evidence" value="ECO:0000314"/>
    <property type="project" value="MGI"/>
</dbReference>
<dbReference type="GO" id="GO:0030674">
    <property type="term" value="F:protein-macromolecule adaptor activity"/>
    <property type="evidence" value="ECO:0000314"/>
    <property type="project" value="UniProtKB"/>
</dbReference>
<dbReference type="GO" id="GO:0043130">
    <property type="term" value="F:ubiquitin binding"/>
    <property type="evidence" value="ECO:0000314"/>
    <property type="project" value="BHF-UCL"/>
</dbReference>
<dbReference type="GO" id="GO:0031625">
    <property type="term" value="F:ubiquitin protein ligase binding"/>
    <property type="evidence" value="ECO:0000314"/>
    <property type="project" value="BHF-UCL"/>
</dbReference>
<dbReference type="GO" id="GO:0036503">
    <property type="term" value="P:ERAD pathway"/>
    <property type="evidence" value="ECO:0000315"/>
    <property type="project" value="UniProtKB"/>
</dbReference>
<dbReference type="GO" id="GO:0034389">
    <property type="term" value="P:lipid droplet organization"/>
    <property type="evidence" value="ECO:0000315"/>
    <property type="project" value="MGI"/>
</dbReference>
<dbReference type="GO" id="GO:0043161">
    <property type="term" value="P:proteasome-mediated ubiquitin-dependent protein catabolic process"/>
    <property type="evidence" value="ECO:0007669"/>
    <property type="project" value="Ensembl"/>
</dbReference>
<dbReference type="GO" id="GO:0006986">
    <property type="term" value="P:response to unfolded protein"/>
    <property type="evidence" value="ECO:0007669"/>
    <property type="project" value="UniProtKB-KW"/>
</dbReference>
<dbReference type="GO" id="GO:0030970">
    <property type="term" value="P:retrograde protein transport, ER to cytosol"/>
    <property type="evidence" value="ECO:0000315"/>
    <property type="project" value="ParkinsonsUK-UCL"/>
</dbReference>
<dbReference type="GO" id="GO:0035617">
    <property type="term" value="P:stress granule disassembly"/>
    <property type="evidence" value="ECO:0000314"/>
    <property type="project" value="UniProtKB"/>
</dbReference>
<dbReference type="CDD" id="cd02991">
    <property type="entry name" value="UAS_ETEA"/>
    <property type="match status" value="1"/>
</dbReference>
<dbReference type="CDD" id="cd14414">
    <property type="entry name" value="UBA_FAF2"/>
    <property type="match status" value="1"/>
</dbReference>
<dbReference type="CDD" id="cd16120">
    <property type="entry name" value="UBX_UBXN3B"/>
    <property type="match status" value="1"/>
</dbReference>
<dbReference type="FunFam" id="3.10.20.90:FF:000101">
    <property type="entry name" value="FAS-associated factor 2 isoform X2"/>
    <property type="match status" value="1"/>
</dbReference>
<dbReference type="FunFam" id="3.40.30.10:FF:000066">
    <property type="entry name" value="FAS-associated factor 2 isoform X2"/>
    <property type="match status" value="1"/>
</dbReference>
<dbReference type="FunFam" id="1.10.8.10:FF:000043">
    <property type="entry name" value="Fas-associated factor family member 2"/>
    <property type="match status" value="1"/>
</dbReference>
<dbReference type="Gene3D" id="1.10.8.10">
    <property type="entry name" value="DNA helicase RuvA subunit, C-terminal domain"/>
    <property type="match status" value="1"/>
</dbReference>
<dbReference type="Gene3D" id="3.40.30.10">
    <property type="entry name" value="Glutaredoxin"/>
    <property type="match status" value="1"/>
</dbReference>
<dbReference type="Gene3D" id="3.10.20.90">
    <property type="entry name" value="Phosphatidylinositol 3-kinase Catalytic Subunit, Chain A, domain 1"/>
    <property type="match status" value="1"/>
</dbReference>
<dbReference type="InterPro" id="IPR049483">
    <property type="entry name" value="FAF1_2-like_UAS"/>
</dbReference>
<dbReference type="InterPro" id="IPR036249">
    <property type="entry name" value="Thioredoxin-like_sf"/>
</dbReference>
<dbReference type="InterPro" id="IPR006577">
    <property type="entry name" value="UAS"/>
</dbReference>
<dbReference type="InterPro" id="IPR009060">
    <property type="entry name" value="UBA-like_sf"/>
</dbReference>
<dbReference type="InterPro" id="IPR054109">
    <property type="entry name" value="UBA_8"/>
</dbReference>
<dbReference type="InterPro" id="IPR029071">
    <property type="entry name" value="Ubiquitin-like_domsf"/>
</dbReference>
<dbReference type="InterPro" id="IPR001012">
    <property type="entry name" value="UBX_dom"/>
</dbReference>
<dbReference type="InterPro" id="IPR050730">
    <property type="entry name" value="UBX_domain-protein"/>
</dbReference>
<dbReference type="PANTHER" id="PTHR23322:SF1">
    <property type="entry name" value="FAS-ASSOCIATED FACTOR 2"/>
    <property type="match status" value="1"/>
</dbReference>
<dbReference type="PANTHER" id="PTHR23322">
    <property type="entry name" value="FAS-ASSOCIATED PROTEIN"/>
    <property type="match status" value="1"/>
</dbReference>
<dbReference type="Pfam" id="PF21021">
    <property type="entry name" value="FAF1"/>
    <property type="match status" value="1"/>
</dbReference>
<dbReference type="Pfam" id="PF22566">
    <property type="entry name" value="UBA_8"/>
    <property type="match status" value="1"/>
</dbReference>
<dbReference type="Pfam" id="PF00789">
    <property type="entry name" value="UBX"/>
    <property type="match status" value="1"/>
</dbReference>
<dbReference type="SMART" id="SM00594">
    <property type="entry name" value="UAS"/>
    <property type="match status" value="1"/>
</dbReference>
<dbReference type="SUPFAM" id="SSF52833">
    <property type="entry name" value="Thioredoxin-like"/>
    <property type="match status" value="1"/>
</dbReference>
<dbReference type="SUPFAM" id="SSF46934">
    <property type="entry name" value="UBA-like"/>
    <property type="match status" value="1"/>
</dbReference>
<dbReference type="SUPFAM" id="SSF54236">
    <property type="entry name" value="Ubiquitin-like"/>
    <property type="match status" value="1"/>
</dbReference>
<dbReference type="PROSITE" id="PS50033">
    <property type="entry name" value="UBX"/>
    <property type="match status" value="1"/>
</dbReference>
<sequence length="445" mass="52623">MAAPEERDLTQEQTEKLLQFQDLTGIESMDQCRHTLEQHNWNIEAAVQDRLNEQEGVPSVFNPPPSRPLQVNTADHRIYSYVVSRPQPRGLLGWGYYLIMLPFRFTYYTILDIFRFALRFIRPDPRSRVTDPVGDIVSFMHSFEEKYGRAHPVFYQGTYSQALNDAKRELRFLLVYLHGDDHQDSDEFCRNTLCAPEVISLINTRMLFWACSTNKPEGYRVSQALRENTYPFLAMIMLKDRRMTVVGRLEGLIQPDDLINQLTFIMDANQTYLVSERLEREERNQTQVLRQQQDEAYLASLRADQEKERKKREERERKRRKEEEVQQQKLAEERRRQNLQEEKERKLECLPPEPSPDDPESVKIIFKLPNDSRVERRFHFSQSLTVIHDFLFSLKESPEKFQIEANFPRRVLPCIPSEEWPNPPTLQEAGLSHTEVLFVQDLTDE</sequence>
<keyword id="KW-0002">3D-structure</keyword>
<keyword id="KW-0007">Acetylation</keyword>
<keyword id="KW-0175">Coiled coil</keyword>
<keyword id="KW-0963">Cytoplasm</keyword>
<keyword id="KW-0256">Endoplasmic reticulum</keyword>
<keyword id="KW-0551">Lipid droplet</keyword>
<keyword id="KW-1267">Proteomics identification</keyword>
<keyword id="KW-1185">Reference proteome</keyword>
<keyword id="KW-0834">Unfolded protein response</keyword>
<gene>
    <name evidence="15 17" type="primary">FAF2</name>
    <name evidence="14" type="synonym">ETEA</name>
    <name evidence="13" type="synonym">KIAA0887</name>
    <name type="synonym">UBXD8</name>
    <name type="synonym">UBXN3B</name>
</gene>